<protein>
    <recommendedName>
        <fullName evidence="1">ATP synthase subunit alpha</fullName>
        <ecNumber evidence="1">7.1.2.2</ecNumber>
    </recommendedName>
    <alternativeName>
        <fullName evidence="1">ATP synthase F1 sector subunit alpha</fullName>
    </alternativeName>
    <alternativeName>
        <fullName evidence="1">F-ATPase subunit alpha</fullName>
    </alternativeName>
</protein>
<organism>
    <name type="scientific">Colwellia psychrerythraea (strain 34H / ATCC BAA-681)</name>
    <name type="common">Vibrio psychroerythus</name>
    <dbReference type="NCBI Taxonomy" id="167879"/>
    <lineage>
        <taxon>Bacteria</taxon>
        <taxon>Pseudomonadati</taxon>
        <taxon>Pseudomonadota</taxon>
        <taxon>Gammaproteobacteria</taxon>
        <taxon>Alteromonadales</taxon>
        <taxon>Colwelliaceae</taxon>
        <taxon>Colwellia</taxon>
    </lineage>
</organism>
<gene>
    <name evidence="1" type="primary">atpA</name>
    <name type="ordered locus">CPS_0060</name>
</gene>
<accession>Q48AW2</accession>
<evidence type="ECO:0000255" key="1">
    <source>
        <dbReference type="HAMAP-Rule" id="MF_01346"/>
    </source>
</evidence>
<keyword id="KW-0066">ATP synthesis</keyword>
<keyword id="KW-0067">ATP-binding</keyword>
<keyword id="KW-0997">Cell inner membrane</keyword>
<keyword id="KW-1003">Cell membrane</keyword>
<keyword id="KW-0139">CF(1)</keyword>
<keyword id="KW-0375">Hydrogen ion transport</keyword>
<keyword id="KW-0406">Ion transport</keyword>
<keyword id="KW-0472">Membrane</keyword>
<keyword id="KW-0547">Nucleotide-binding</keyword>
<keyword id="KW-1278">Translocase</keyword>
<keyword id="KW-0813">Transport</keyword>
<reference key="1">
    <citation type="journal article" date="2005" name="Proc. Natl. Acad. Sci. U.S.A.">
        <title>The psychrophilic lifestyle as revealed by the genome sequence of Colwellia psychrerythraea 34H through genomic and proteomic analyses.</title>
        <authorList>
            <person name="Methe B.A."/>
            <person name="Nelson K.E."/>
            <person name="Deming J.W."/>
            <person name="Momen B."/>
            <person name="Melamud E."/>
            <person name="Zhang X."/>
            <person name="Moult J."/>
            <person name="Madupu R."/>
            <person name="Nelson W.C."/>
            <person name="Dodson R.J."/>
            <person name="Brinkac L.M."/>
            <person name="Daugherty S.C."/>
            <person name="Durkin A.S."/>
            <person name="DeBoy R.T."/>
            <person name="Kolonay J.F."/>
            <person name="Sullivan S.A."/>
            <person name="Zhou L."/>
            <person name="Davidsen T.M."/>
            <person name="Wu M."/>
            <person name="Huston A.L."/>
            <person name="Lewis M."/>
            <person name="Weaver B."/>
            <person name="Weidman J.F."/>
            <person name="Khouri H."/>
            <person name="Utterback T.R."/>
            <person name="Feldblyum T.V."/>
            <person name="Fraser C.M."/>
        </authorList>
    </citation>
    <scope>NUCLEOTIDE SEQUENCE [LARGE SCALE GENOMIC DNA]</scope>
    <source>
        <strain>34H / ATCC BAA-681</strain>
    </source>
</reference>
<proteinExistence type="inferred from homology"/>
<feature type="chain" id="PRO_0000238233" description="ATP synthase subunit alpha">
    <location>
        <begin position="1"/>
        <end position="513"/>
    </location>
</feature>
<feature type="binding site" evidence="1">
    <location>
        <begin position="169"/>
        <end position="176"/>
    </location>
    <ligand>
        <name>ATP</name>
        <dbReference type="ChEBI" id="CHEBI:30616"/>
    </ligand>
</feature>
<feature type="site" description="Required for activity" evidence="1">
    <location>
        <position position="373"/>
    </location>
</feature>
<comment type="function">
    <text evidence="1">Produces ATP from ADP in the presence of a proton gradient across the membrane. The alpha chain is a regulatory subunit.</text>
</comment>
<comment type="catalytic activity">
    <reaction evidence="1">
        <text>ATP + H2O + 4 H(+)(in) = ADP + phosphate + 5 H(+)(out)</text>
        <dbReference type="Rhea" id="RHEA:57720"/>
        <dbReference type="ChEBI" id="CHEBI:15377"/>
        <dbReference type="ChEBI" id="CHEBI:15378"/>
        <dbReference type="ChEBI" id="CHEBI:30616"/>
        <dbReference type="ChEBI" id="CHEBI:43474"/>
        <dbReference type="ChEBI" id="CHEBI:456216"/>
        <dbReference type="EC" id="7.1.2.2"/>
    </reaction>
</comment>
<comment type="subunit">
    <text evidence="1">F-type ATPases have 2 components, CF(1) - the catalytic core - and CF(0) - the membrane proton channel. CF(1) has five subunits: alpha(3), beta(3), gamma(1), delta(1), epsilon(1). CF(0) has three main subunits: a(1), b(2) and c(9-12). The alpha and beta chains form an alternating ring which encloses part of the gamma chain. CF(1) is attached to CF(0) by a central stalk formed by the gamma and epsilon chains, while a peripheral stalk is formed by the delta and b chains.</text>
</comment>
<comment type="subcellular location">
    <subcellularLocation>
        <location evidence="1">Cell inner membrane</location>
        <topology evidence="1">Peripheral membrane protein</topology>
    </subcellularLocation>
</comment>
<comment type="similarity">
    <text evidence="1">Belongs to the ATPase alpha/beta chains family.</text>
</comment>
<dbReference type="EC" id="7.1.2.2" evidence="1"/>
<dbReference type="EMBL" id="CP000083">
    <property type="protein sequence ID" value="AAZ26667.1"/>
    <property type="molecule type" value="Genomic_DNA"/>
</dbReference>
<dbReference type="RefSeq" id="WP_011040935.1">
    <property type="nucleotide sequence ID" value="NC_003910.7"/>
</dbReference>
<dbReference type="SMR" id="Q48AW2"/>
<dbReference type="STRING" id="167879.CPS_0060"/>
<dbReference type="KEGG" id="cps:CPS_0060"/>
<dbReference type="eggNOG" id="COG0056">
    <property type="taxonomic scope" value="Bacteria"/>
</dbReference>
<dbReference type="HOGENOM" id="CLU_010091_2_1_6"/>
<dbReference type="Proteomes" id="UP000000547">
    <property type="component" value="Chromosome"/>
</dbReference>
<dbReference type="GO" id="GO:0005886">
    <property type="term" value="C:plasma membrane"/>
    <property type="evidence" value="ECO:0007669"/>
    <property type="project" value="UniProtKB-SubCell"/>
</dbReference>
<dbReference type="GO" id="GO:0045259">
    <property type="term" value="C:proton-transporting ATP synthase complex"/>
    <property type="evidence" value="ECO:0007669"/>
    <property type="project" value="UniProtKB-KW"/>
</dbReference>
<dbReference type="GO" id="GO:0043531">
    <property type="term" value="F:ADP binding"/>
    <property type="evidence" value="ECO:0007669"/>
    <property type="project" value="TreeGrafter"/>
</dbReference>
<dbReference type="GO" id="GO:0005524">
    <property type="term" value="F:ATP binding"/>
    <property type="evidence" value="ECO:0007669"/>
    <property type="project" value="UniProtKB-UniRule"/>
</dbReference>
<dbReference type="GO" id="GO:0046933">
    <property type="term" value="F:proton-transporting ATP synthase activity, rotational mechanism"/>
    <property type="evidence" value="ECO:0007669"/>
    <property type="project" value="UniProtKB-UniRule"/>
</dbReference>
<dbReference type="CDD" id="cd18113">
    <property type="entry name" value="ATP-synt_F1_alpha_C"/>
    <property type="match status" value="1"/>
</dbReference>
<dbReference type="CDD" id="cd18116">
    <property type="entry name" value="ATP-synt_F1_alpha_N"/>
    <property type="match status" value="1"/>
</dbReference>
<dbReference type="CDD" id="cd01132">
    <property type="entry name" value="F1-ATPase_alpha_CD"/>
    <property type="match status" value="1"/>
</dbReference>
<dbReference type="FunFam" id="1.20.150.20:FF:000001">
    <property type="entry name" value="ATP synthase subunit alpha"/>
    <property type="match status" value="1"/>
</dbReference>
<dbReference type="FunFam" id="2.40.30.20:FF:000001">
    <property type="entry name" value="ATP synthase subunit alpha"/>
    <property type="match status" value="1"/>
</dbReference>
<dbReference type="FunFam" id="3.40.50.300:FF:000002">
    <property type="entry name" value="ATP synthase subunit alpha"/>
    <property type="match status" value="1"/>
</dbReference>
<dbReference type="Gene3D" id="2.40.30.20">
    <property type="match status" value="1"/>
</dbReference>
<dbReference type="Gene3D" id="1.20.150.20">
    <property type="entry name" value="ATP synthase alpha/beta chain, C-terminal domain"/>
    <property type="match status" value="1"/>
</dbReference>
<dbReference type="Gene3D" id="3.40.50.300">
    <property type="entry name" value="P-loop containing nucleotide triphosphate hydrolases"/>
    <property type="match status" value="1"/>
</dbReference>
<dbReference type="HAMAP" id="MF_01346">
    <property type="entry name" value="ATP_synth_alpha_bact"/>
    <property type="match status" value="1"/>
</dbReference>
<dbReference type="InterPro" id="IPR023366">
    <property type="entry name" value="ATP_synth_asu-like_sf"/>
</dbReference>
<dbReference type="InterPro" id="IPR000793">
    <property type="entry name" value="ATP_synth_asu_C"/>
</dbReference>
<dbReference type="InterPro" id="IPR038376">
    <property type="entry name" value="ATP_synth_asu_C_sf"/>
</dbReference>
<dbReference type="InterPro" id="IPR033732">
    <property type="entry name" value="ATP_synth_F1_a_nt-bd_dom"/>
</dbReference>
<dbReference type="InterPro" id="IPR005294">
    <property type="entry name" value="ATP_synth_F1_asu"/>
</dbReference>
<dbReference type="InterPro" id="IPR020003">
    <property type="entry name" value="ATPase_a/bsu_AS"/>
</dbReference>
<dbReference type="InterPro" id="IPR004100">
    <property type="entry name" value="ATPase_F1/V1/A1_a/bsu_N"/>
</dbReference>
<dbReference type="InterPro" id="IPR036121">
    <property type="entry name" value="ATPase_F1/V1/A1_a/bsu_N_sf"/>
</dbReference>
<dbReference type="InterPro" id="IPR000194">
    <property type="entry name" value="ATPase_F1/V1/A1_a/bsu_nucl-bd"/>
</dbReference>
<dbReference type="InterPro" id="IPR027417">
    <property type="entry name" value="P-loop_NTPase"/>
</dbReference>
<dbReference type="NCBIfam" id="TIGR00962">
    <property type="entry name" value="atpA"/>
    <property type="match status" value="1"/>
</dbReference>
<dbReference type="NCBIfam" id="NF009884">
    <property type="entry name" value="PRK13343.1"/>
    <property type="match status" value="1"/>
</dbReference>
<dbReference type="PANTHER" id="PTHR48082">
    <property type="entry name" value="ATP SYNTHASE SUBUNIT ALPHA, MITOCHONDRIAL"/>
    <property type="match status" value="1"/>
</dbReference>
<dbReference type="PANTHER" id="PTHR48082:SF2">
    <property type="entry name" value="ATP SYNTHASE SUBUNIT ALPHA, MITOCHONDRIAL"/>
    <property type="match status" value="1"/>
</dbReference>
<dbReference type="Pfam" id="PF00006">
    <property type="entry name" value="ATP-synt_ab"/>
    <property type="match status" value="1"/>
</dbReference>
<dbReference type="Pfam" id="PF00306">
    <property type="entry name" value="ATP-synt_ab_C"/>
    <property type="match status" value="1"/>
</dbReference>
<dbReference type="Pfam" id="PF02874">
    <property type="entry name" value="ATP-synt_ab_N"/>
    <property type="match status" value="1"/>
</dbReference>
<dbReference type="SUPFAM" id="SSF47917">
    <property type="entry name" value="C-terminal domain of alpha and beta subunits of F1 ATP synthase"/>
    <property type="match status" value="1"/>
</dbReference>
<dbReference type="SUPFAM" id="SSF50615">
    <property type="entry name" value="N-terminal domain of alpha and beta subunits of F1 ATP synthase"/>
    <property type="match status" value="1"/>
</dbReference>
<dbReference type="SUPFAM" id="SSF52540">
    <property type="entry name" value="P-loop containing nucleoside triphosphate hydrolases"/>
    <property type="match status" value="1"/>
</dbReference>
<dbReference type="PROSITE" id="PS00152">
    <property type="entry name" value="ATPASE_ALPHA_BETA"/>
    <property type="match status" value="1"/>
</dbReference>
<name>ATPA_COLP3</name>
<sequence length="513" mass="55082">MQLNSTEIAELIKNRIEQFNVVSEARNEGTIVSVTDGIIRINGLADVMQGEMIELPGSRFAIALNLDRDSVGAVVMGPYADLAEGQKVKGTGRILEVPVGRGLLGRVVNTLGEPIDGKGPIENDGFSPVEVIAPGVIDRKSVDEPVQTGIKSIDAMIPIGRGQRELIIGDRQIGKSAIALDAIINQKNTGIKSIYVAIGQKASTVANVVRSLEEHGALSNTIVVVASASEAAALQYLAPYAGCSMGEYFRDRGEDALIVYDDLSKQAVAYRQISLLLRRPPGREAYPGDVFYLHSRLLERAARVNEAYVEKFTNGEVKGKTGSLTALPIIETQAGDVSAFVPTNVISITDGQIFLQSDLFNSGIRPAVNAGISVSRVGGAAQTKIIKKLGGGIRLALAQYAELAAFAQFASDLDDATRAQLEHGQRVTELMKQKQYSPLSIAETAVSLFAAEKGFLNDVAINKVVDFEEALHAYMSNEQAALMATINEKGDYNKDIEASLKTALENFKSTQTW</sequence>